<sequence>ALWKDILKNVGKAAGKAVLNTVTDMVNQ</sequence>
<name>DRS1_PHYTB</name>
<reference key="1">
    <citation type="journal article" date="2004" name="Pancreas">
        <title>Novel insulin-releasing peptides in the skin of Phyllomedusa trinitatis frog include 28 amino acid peptide from dermaseptin BIV precursor.</title>
        <authorList>
            <person name="Marenah L."/>
            <person name="McClean S."/>
            <person name="Flatt P.R."/>
            <person name="Orr D.F."/>
            <person name="Shaw C."/>
            <person name="Abdel-Wahab Y.H."/>
        </authorList>
    </citation>
    <scope>PROTEIN SEQUENCE</scope>
    <scope>FUNCTION</scope>
    <scope>SUBCELLULAR LOCATION</scope>
    <scope>MASS SPECTROMETRY</scope>
    <source>
        <tissue>Skin secretion</tissue>
    </source>
</reference>
<reference key="2">
    <citation type="journal article" date="2018" name="Comp. Biochem. Physiol.">
        <title>Peptidomic analysis of the host-defense peptides in skin secretions of the Trinidadian leaf frog Phyllomedusa trinitatis (Phyllomedusidae).</title>
        <authorList>
            <person name="Mechkarska M."/>
            <person name="Coquet L."/>
            <person name="Leprince J."/>
            <person name="Auguste R.J."/>
            <person name="Jouenne T."/>
            <person name="Mangoni M.L."/>
            <person name="Conlon J.M."/>
        </authorList>
    </citation>
    <scope>PROTEIN SEQUENCE</scope>
    <scope>SUBCELLULAR LOCATION</scope>
    <scope>MASS SPECTROMETRY</scope>
    <source>
        <tissue>Skin secretion</tissue>
    </source>
</reference>
<reference key="3">
    <citation type="journal article" date="2008" name="Peptides">
        <title>A consistent nomenclature of antimicrobial peptides isolated from frogs of the subfamily Phyllomedusinae.</title>
        <authorList>
            <person name="Amiche M."/>
            <person name="Ladram A."/>
            <person name="Nicolas P."/>
        </authorList>
    </citation>
    <scope>NOMENCLATURE</scope>
</reference>
<accession>C0HLC4</accession>
<keyword id="KW-0878">Amphibian defense peptide</keyword>
<keyword id="KW-0929">Antimicrobial</keyword>
<keyword id="KW-0903">Direct protein sequencing</keyword>
<keyword id="KW-0391">Immunity</keyword>
<keyword id="KW-0399">Innate immunity</keyword>
<keyword id="KW-0964">Secreted</keyword>
<feature type="peptide" id="PRO_0000445211" description="Dermaseptin-TR1" evidence="4">
    <location>
        <begin position="1"/>
        <end position="28"/>
    </location>
</feature>
<evidence type="ECO:0000250" key="1">
    <source>
        <dbReference type="UniProtKB" id="P81486"/>
    </source>
</evidence>
<evidence type="ECO:0000250" key="2">
    <source>
        <dbReference type="UniProtKB" id="P84922"/>
    </source>
</evidence>
<evidence type="ECO:0000269" key="3">
    <source>
    </source>
</evidence>
<evidence type="ECO:0000269" key="4">
    <source>
    </source>
</evidence>
<evidence type="ECO:0000303" key="5">
    <source>
    </source>
</evidence>
<evidence type="ECO:0000303" key="6">
    <source>
    </source>
</evidence>
<evidence type="ECO:0000303" key="7">
    <source>
    </source>
</evidence>
<evidence type="ECO:0000305" key="8"/>
<evidence type="ECO:0000305" key="9">
    <source>
    </source>
</evidence>
<evidence type="ECO:0000305" key="10">
    <source>
    </source>
</evidence>
<protein>
    <recommendedName>
        <fullName evidence="6">Dermaseptin-TR1</fullName>
        <shortName evidence="6">DRS-TR1</shortName>
    </recommendedName>
    <alternativeName>
        <fullName evidence="7">Dermaseptin-2.1TR</fullName>
    </alternativeName>
    <alternativeName>
        <fullName evidence="5">Insulin-releasing peptide</fullName>
        <shortName evidence="5">IRP</shortName>
    </alternativeName>
</protein>
<proteinExistence type="evidence at protein level"/>
<comment type="function">
    <text evidence="1 2 3">Stimulates insulin release (PubMed:15257102). This activity may protect the species from being eaten by predators by causing fatal hypoglycemia (PubMed:15257102). Possesses a potent antimicrobial activity against Gram-positive and Gram-negative bacteria (By similarity). Probably acts by disturbing membrane functions with its amphipathic structure (By similarity). Has hemolytic activity (By similarity).</text>
</comment>
<comment type="subcellular location">
    <subcellularLocation>
        <location evidence="3 4">Secreted</location>
    </subcellularLocation>
</comment>
<comment type="tissue specificity">
    <text evidence="9 10">Expressed by the skin glands.</text>
</comment>
<comment type="mass spectrometry"/>
<comment type="mass spectrometry"/>
<comment type="miscellaneous">
    <text evidence="8">The primary structure of this peptide is identical to that of Dermaseptin-B4 from Phyllomedusa bicolor (AC P81486), and Dermaseptin-2 from P.tarsius (AC P84922). However, this peptide is not amidated, in contrast to the two mentionned peptides.</text>
</comment>
<comment type="similarity">
    <text evidence="8">Belongs to the frog skin active peptide (FSAP) family. Dermaseptin subfamily.</text>
</comment>
<comment type="online information" name="The antimicrobial peptide database">
    <link uri="https://wangapd3.com/database/query_output.php?ID=00163"/>
</comment>
<organism>
    <name type="scientific">Phyllomedusa trinitatis</name>
    <name type="common">Trinidad leaf frog</name>
    <dbReference type="NCBI Taxonomy" id="332092"/>
    <lineage>
        <taxon>Eukaryota</taxon>
        <taxon>Metazoa</taxon>
        <taxon>Chordata</taxon>
        <taxon>Craniata</taxon>
        <taxon>Vertebrata</taxon>
        <taxon>Euteleostomi</taxon>
        <taxon>Amphibia</taxon>
        <taxon>Batrachia</taxon>
        <taxon>Anura</taxon>
        <taxon>Neobatrachia</taxon>
        <taxon>Hyloidea</taxon>
        <taxon>Hylidae</taxon>
        <taxon>Phyllomedusinae</taxon>
        <taxon>Phyllomedusa</taxon>
    </lineage>
</organism>
<dbReference type="SMR" id="C0HLC4"/>
<dbReference type="GO" id="GO:0005576">
    <property type="term" value="C:extracellular region"/>
    <property type="evidence" value="ECO:0007669"/>
    <property type="project" value="UniProtKB-SubCell"/>
</dbReference>
<dbReference type="GO" id="GO:0045087">
    <property type="term" value="P:innate immune response"/>
    <property type="evidence" value="ECO:0007669"/>
    <property type="project" value="UniProtKB-KW"/>
</dbReference>
<dbReference type="InterPro" id="IPR022731">
    <property type="entry name" value="Dermaseptin_dom"/>
</dbReference>
<dbReference type="Pfam" id="PF12121">
    <property type="entry name" value="DD_K"/>
    <property type="match status" value="1"/>
</dbReference>